<accession>P34817</accession>
<sequence>MTQSQTDLRNGPDATGMFGAFGGRYVAETLMPLILDLAREYEAAKEDPAFKEELAYFQRDYVGRPSPLYFAERLTEFCGGAKIYLKREELNHTGAHKINNCIGQILLARRMGKKRIIAETGAGMHGVATATVAARFGLQCVIYMGTTDIERQQANVFRMKLLGAEVIPVVAGTGTLKDAMNEALRDWVTNVEDTFYLIGTVAGPHPYPAMVRDFQAVIGKETRDQLQAQEGRLPDSLVACIGGGSNAMGLFHPFLDDKSVEIIGVEAAGHGIETGKHAASLNGGVPGVLHGNRTFLLQDDDGQIIDAHSISAGLDYPGIGPEHAWLHDIGRVQYTSVTDDEALDAFHKCCRLEGIIPALESAHALAEVFKRAPTLPKDHLMVVNLSGRGDKDMQTVMHHMETTKQEKH</sequence>
<gene>
    <name type="primary">trpB</name>
</gene>
<protein>
    <recommendedName>
        <fullName>Tryptophan synthase beta chain</fullName>
        <ecNumber>4.2.1.20</ecNumber>
    </recommendedName>
</protein>
<dbReference type="EC" id="4.2.1.20"/>
<dbReference type="EMBL" id="M95710">
    <property type="protein sequence ID" value="AAA26014.1"/>
    <property type="molecule type" value="Genomic_DNA"/>
</dbReference>
<dbReference type="PIR" id="JQ2126">
    <property type="entry name" value="JQ2126"/>
</dbReference>
<dbReference type="SMR" id="P34817"/>
<dbReference type="UniPathway" id="UPA00035">
    <property type="reaction ID" value="UER00044"/>
</dbReference>
<dbReference type="GO" id="GO:0005737">
    <property type="term" value="C:cytoplasm"/>
    <property type="evidence" value="ECO:0007669"/>
    <property type="project" value="TreeGrafter"/>
</dbReference>
<dbReference type="GO" id="GO:0004834">
    <property type="term" value="F:tryptophan synthase activity"/>
    <property type="evidence" value="ECO:0007669"/>
    <property type="project" value="UniProtKB-UniRule"/>
</dbReference>
<dbReference type="CDD" id="cd06446">
    <property type="entry name" value="Trp-synth_B"/>
    <property type="match status" value="1"/>
</dbReference>
<dbReference type="FunFam" id="3.40.50.1100:FF:000001">
    <property type="entry name" value="Tryptophan synthase beta chain"/>
    <property type="match status" value="1"/>
</dbReference>
<dbReference type="FunFam" id="3.40.50.1100:FF:000004">
    <property type="entry name" value="Tryptophan synthase beta chain"/>
    <property type="match status" value="1"/>
</dbReference>
<dbReference type="Gene3D" id="3.40.50.1100">
    <property type="match status" value="2"/>
</dbReference>
<dbReference type="HAMAP" id="MF_00133">
    <property type="entry name" value="Trp_synth_beta"/>
    <property type="match status" value="1"/>
</dbReference>
<dbReference type="InterPro" id="IPR006653">
    <property type="entry name" value="Trp_synth_b_CS"/>
</dbReference>
<dbReference type="InterPro" id="IPR006654">
    <property type="entry name" value="Trp_synth_beta"/>
</dbReference>
<dbReference type="InterPro" id="IPR023026">
    <property type="entry name" value="Trp_synth_beta/beta-like"/>
</dbReference>
<dbReference type="InterPro" id="IPR001926">
    <property type="entry name" value="TrpB-like_PALP"/>
</dbReference>
<dbReference type="InterPro" id="IPR036052">
    <property type="entry name" value="TrpB-like_PALP_sf"/>
</dbReference>
<dbReference type="NCBIfam" id="TIGR00263">
    <property type="entry name" value="trpB"/>
    <property type="match status" value="1"/>
</dbReference>
<dbReference type="PANTHER" id="PTHR48077:SF3">
    <property type="entry name" value="TRYPTOPHAN SYNTHASE"/>
    <property type="match status" value="1"/>
</dbReference>
<dbReference type="PANTHER" id="PTHR48077">
    <property type="entry name" value="TRYPTOPHAN SYNTHASE-RELATED"/>
    <property type="match status" value="1"/>
</dbReference>
<dbReference type="Pfam" id="PF00291">
    <property type="entry name" value="PALP"/>
    <property type="match status" value="1"/>
</dbReference>
<dbReference type="PIRSF" id="PIRSF001413">
    <property type="entry name" value="Trp_syn_beta"/>
    <property type="match status" value="1"/>
</dbReference>
<dbReference type="SUPFAM" id="SSF53686">
    <property type="entry name" value="Tryptophan synthase beta subunit-like PLP-dependent enzymes"/>
    <property type="match status" value="1"/>
</dbReference>
<dbReference type="PROSITE" id="PS00168">
    <property type="entry name" value="TRP_SYNTHASE_BETA"/>
    <property type="match status" value="1"/>
</dbReference>
<comment type="function">
    <text evidence="1">The beta subunit is responsible for the synthesis of L-tryptophan from indole and L-serine.</text>
</comment>
<comment type="catalytic activity">
    <reaction>
        <text>(1S,2R)-1-C-(indol-3-yl)glycerol 3-phosphate + L-serine = D-glyceraldehyde 3-phosphate + L-tryptophan + H2O</text>
        <dbReference type="Rhea" id="RHEA:10532"/>
        <dbReference type="ChEBI" id="CHEBI:15377"/>
        <dbReference type="ChEBI" id="CHEBI:33384"/>
        <dbReference type="ChEBI" id="CHEBI:57912"/>
        <dbReference type="ChEBI" id="CHEBI:58866"/>
        <dbReference type="ChEBI" id="CHEBI:59776"/>
        <dbReference type="EC" id="4.2.1.20"/>
    </reaction>
</comment>
<comment type="cofactor">
    <cofactor evidence="1">
        <name>pyridoxal 5'-phosphate</name>
        <dbReference type="ChEBI" id="CHEBI:597326"/>
    </cofactor>
</comment>
<comment type="pathway">
    <text>Amino-acid biosynthesis; L-tryptophan biosynthesis; L-tryptophan from chorismate: step 5/5.</text>
</comment>
<comment type="subunit">
    <text evidence="1">Tetramer of two alpha and two beta chains.</text>
</comment>
<comment type="similarity">
    <text evidence="2">Belongs to the TrpB family.</text>
</comment>
<keyword id="KW-0028">Amino-acid biosynthesis</keyword>
<keyword id="KW-0057">Aromatic amino acid biosynthesis</keyword>
<keyword id="KW-0456">Lyase</keyword>
<keyword id="KW-0663">Pyridoxal phosphate</keyword>
<keyword id="KW-0822">Tryptophan biosynthesis</keyword>
<proteinExistence type="inferred from homology"/>
<reference key="1">
    <citation type="journal article" date="1993" name="Gene">
        <title>Nucleotide sequences of the trpI, trpB, and trpA genes of Pseudomonas syringae: positive control unique to fluorescent pseudomonads.</title>
        <authorList>
            <person name="Auerbach S."/>
            <person name="Gao J."/>
            <person name="Gussin G.N."/>
        </authorList>
    </citation>
    <scope>NUCLEOTIDE SEQUENCE [GENOMIC DNA]</scope>
</reference>
<feature type="chain" id="PRO_0000098986" description="Tryptophan synthase beta chain">
    <location>
        <begin position="1"/>
        <end position="408"/>
    </location>
</feature>
<feature type="modified residue" description="N6-(pyridoxal phosphate)lysine" evidence="1">
    <location>
        <position position="97"/>
    </location>
</feature>
<evidence type="ECO:0000250" key="1"/>
<evidence type="ECO:0000305" key="2"/>
<name>TRPB_PSESY</name>
<organism>
    <name type="scientific">Pseudomonas syringae pv. syringae</name>
    <dbReference type="NCBI Taxonomy" id="321"/>
    <lineage>
        <taxon>Bacteria</taxon>
        <taxon>Pseudomonadati</taxon>
        <taxon>Pseudomonadota</taxon>
        <taxon>Gammaproteobacteria</taxon>
        <taxon>Pseudomonadales</taxon>
        <taxon>Pseudomonadaceae</taxon>
        <taxon>Pseudomonas</taxon>
        <taxon>Pseudomonas syringae</taxon>
    </lineage>
</organism>